<sequence length="370" mass="38441">MASETAFQATGAGRIVISVDAMGGDRGPAAVVAGLAESASAIPGAYFIVHGDEAHLGPMIAKRKDLKGRCEIRHAPRVVTMNDKPSQVMRHGEGTSMWSCIESVRAGEATVAVSCGNTGALMAVSMIRLRKLPGVNRPAIACMWPSRNPGGFNVMLDVGADIKADAEDLAQYALMGASYARNGLSLERPRVGLLNVGTEEHKGRAELKVAQDLISANAAAGAYEFVGFIEGGDIPGRRCDVIVTDGFTGNVALKTGEGTAKLISDFLREAFGANILSKMAAVLALGSLKRLQKRIDPRRVNGGVFLGLNGTVVKSHGSADGTGVAAAIALAARLAQSGFHERLAARLASAGRAGQDAPDEMAAPGRSEKR</sequence>
<dbReference type="EC" id="2.3.1.274" evidence="1"/>
<dbReference type="EMBL" id="CP001150">
    <property type="protein sequence ID" value="ACM00785.1"/>
    <property type="molecule type" value="Genomic_DNA"/>
</dbReference>
<dbReference type="RefSeq" id="WP_011337608.1">
    <property type="nucleotide sequence ID" value="NC_011963.1"/>
</dbReference>
<dbReference type="SMR" id="B9KR58"/>
<dbReference type="GeneID" id="67446365"/>
<dbReference type="KEGG" id="rsk:RSKD131_0925"/>
<dbReference type="HOGENOM" id="CLU_039379_1_0_5"/>
<dbReference type="UniPathway" id="UPA00085"/>
<dbReference type="GO" id="GO:0005737">
    <property type="term" value="C:cytoplasm"/>
    <property type="evidence" value="ECO:0007669"/>
    <property type="project" value="UniProtKB-SubCell"/>
</dbReference>
<dbReference type="GO" id="GO:0043811">
    <property type="term" value="F:phosphate:acyl-[acyl carrier protein] acyltransferase activity"/>
    <property type="evidence" value="ECO:0007669"/>
    <property type="project" value="UniProtKB-UniRule"/>
</dbReference>
<dbReference type="GO" id="GO:0006633">
    <property type="term" value="P:fatty acid biosynthetic process"/>
    <property type="evidence" value="ECO:0007669"/>
    <property type="project" value="UniProtKB-UniRule"/>
</dbReference>
<dbReference type="GO" id="GO:0008654">
    <property type="term" value="P:phospholipid biosynthetic process"/>
    <property type="evidence" value="ECO:0007669"/>
    <property type="project" value="UniProtKB-KW"/>
</dbReference>
<dbReference type="Gene3D" id="3.40.718.10">
    <property type="entry name" value="Isopropylmalate Dehydrogenase"/>
    <property type="match status" value="1"/>
</dbReference>
<dbReference type="HAMAP" id="MF_00019">
    <property type="entry name" value="PlsX"/>
    <property type="match status" value="1"/>
</dbReference>
<dbReference type="InterPro" id="IPR003664">
    <property type="entry name" value="FA_synthesis"/>
</dbReference>
<dbReference type="InterPro" id="IPR012281">
    <property type="entry name" value="Phospholipid_synth_PlsX-like"/>
</dbReference>
<dbReference type="NCBIfam" id="TIGR00182">
    <property type="entry name" value="plsX"/>
    <property type="match status" value="1"/>
</dbReference>
<dbReference type="PANTHER" id="PTHR30100">
    <property type="entry name" value="FATTY ACID/PHOSPHOLIPID SYNTHESIS PROTEIN PLSX"/>
    <property type="match status" value="1"/>
</dbReference>
<dbReference type="PANTHER" id="PTHR30100:SF1">
    <property type="entry name" value="PHOSPHATE ACYLTRANSFERASE"/>
    <property type="match status" value="1"/>
</dbReference>
<dbReference type="Pfam" id="PF02504">
    <property type="entry name" value="FA_synthesis"/>
    <property type="match status" value="1"/>
</dbReference>
<dbReference type="PIRSF" id="PIRSF002465">
    <property type="entry name" value="Phsphlp_syn_PlsX"/>
    <property type="match status" value="1"/>
</dbReference>
<dbReference type="SUPFAM" id="SSF53659">
    <property type="entry name" value="Isocitrate/Isopropylmalate dehydrogenase-like"/>
    <property type="match status" value="1"/>
</dbReference>
<proteinExistence type="inferred from homology"/>
<feature type="chain" id="PRO_1000193143" description="Phosphate acyltransferase">
    <location>
        <begin position="1"/>
        <end position="370"/>
    </location>
</feature>
<feature type="region of interest" description="Disordered" evidence="2">
    <location>
        <begin position="349"/>
        <end position="370"/>
    </location>
</feature>
<evidence type="ECO:0000255" key="1">
    <source>
        <dbReference type="HAMAP-Rule" id="MF_00019"/>
    </source>
</evidence>
<evidence type="ECO:0000256" key="2">
    <source>
        <dbReference type="SAM" id="MobiDB-lite"/>
    </source>
</evidence>
<accession>B9KR58</accession>
<reference key="1">
    <citation type="journal article" date="2009" name="J. Bacteriol.">
        <title>Complete genome sequence of Rhodobacter sphaeroides KD131.</title>
        <authorList>
            <person name="Lim S.-K."/>
            <person name="Kim S.J."/>
            <person name="Cha S.H."/>
            <person name="Oh Y.-K."/>
            <person name="Rhee H.-J."/>
            <person name="Kim M.-S."/>
            <person name="Lee J.K."/>
        </authorList>
    </citation>
    <scope>NUCLEOTIDE SEQUENCE [LARGE SCALE GENOMIC DNA]</scope>
    <source>
        <strain>KD131 / KCTC 12085</strain>
    </source>
</reference>
<name>PLSX_CERSK</name>
<gene>
    <name evidence="1" type="primary">plsX</name>
    <name type="ordered locus">RSKD131_0925</name>
</gene>
<protein>
    <recommendedName>
        <fullName evidence="1">Phosphate acyltransferase</fullName>
        <ecNumber evidence="1">2.3.1.274</ecNumber>
    </recommendedName>
    <alternativeName>
        <fullName evidence="1">Acyl-ACP phosphotransacylase</fullName>
    </alternativeName>
    <alternativeName>
        <fullName evidence="1">Acyl-[acyl-carrier-protein]--phosphate acyltransferase</fullName>
    </alternativeName>
    <alternativeName>
        <fullName evidence="1">Phosphate-acyl-ACP acyltransferase</fullName>
    </alternativeName>
</protein>
<comment type="function">
    <text evidence="1">Catalyzes the reversible formation of acyl-phosphate (acyl-PO(4)) from acyl-[acyl-carrier-protein] (acyl-ACP). This enzyme utilizes acyl-ACP as fatty acyl donor, but not acyl-CoA.</text>
</comment>
<comment type="catalytic activity">
    <reaction evidence="1">
        <text>a fatty acyl-[ACP] + phosphate = an acyl phosphate + holo-[ACP]</text>
        <dbReference type="Rhea" id="RHEA:42292"/>
        <dbReference type="Rhea" id="RHEA-COMP:9685"/>
        <dbReference type="Rhea" id="RHEA-COMP:14125"/>
        <dbReference type="ChEBI" id="CHEBI:43474"/>
        <dbReference type="ChEBI" id="CHEBI:59918"/>
        <dbReference type="ChEBI" id="CHEBI:64479"/>
        <dbReference type="ChEBI" id="CHEBI:138651"/>
        <dbReference type="EC" id="2.3.1.274"/>
    </reaction>
</comment>
<comment type="pathway">
    <text evidence="1">Lipid metabolism; phospholipid metabolism.</text>
</comment>
<comment type="subunit">
    <text evidence="1">Homodimer. Probably interacts with PlsY.</text>
</comment>
<comment type="subcellular location">
    <subcellularLocation>
        <location evidence="1">Cytoplasm</location>
    </subcellularLocation>
    <text evidence="1">Associated with the membrane possibly through PlsY.</text>
</comment>
<comment type="similarity">
    <text evidence="1">Belongs to the PlsX family.</text>
</comment>
<organism>
    <name type="scientific">Cereibacter sphaeroides (strain KD131 / KCTC 12085)</name>
    <name type="common">Rhodobacter sphaeroides</name>
    <dbReference type="NCBI Taxonomy" id="557760"/>
    <lineage>
        <taxon>Bacteria</taxon>
        <taxon>Pseudomonadati</taxon>
        <taxon>Pseudomonadota</taxon>
        <taxon>Alphaproteobacteria</taxon>
        <taxon>Rhodobacterales</taxon>
        <taxon>Paracoccaceae</taxon>
        <taxon>Cereibacter</taxon>
    </lineage>
</organism>
<keyword id="KW-0963">Cytoplasm</keyword>
<keyword id="KW-0444">Lipid biosynthesis</keyword>
<keyword id="KW-0443">Lipid metabolism</keyword>
<keyword id="KW-0594">Phospholipid biosynthesis</keyword>
<keyword id="KW-1208">Phospholipid metabolism</keyword>
<keyword id="KW-0808">Transferase</keyword>